<dbReference type="EMBL" id="AF340040">
    <property type="protein sequence ID" value="AAQ14903.1"/>
    <property type="molecule type" value="mRNA"/>
</dbReference>
<dbReference type="RefSeq" id="NP_001040600.1">
    <property type="nucleotide sequence ID" value="NM_001047135.1"/>
</dbReference>
<dbReference type="SMR" id="Q5NKV6"/>
<dbReference type="FunCoup" id="Q5NKV6">
    <property type="interactions" value="520"/>
</dbReference>
<dbReference type="STRING" id="9544.ENSMMUP00000012236"/>
<dbReference type="GlyCosmos" id="Q5NKV6">
    <property type="glycosylation" value="10 sites, No reported glycans"/>
</dbReference>
<dbReference type="Ensembl" id="ENSMMUT00000057641.2">
    <property type="protein sequence ID" value="ENSMMUP00000041688.2"/>
    <property type="gene ID" value="ENSMMUG00000014896.4"/>
</dbReference>
<dbReference type="GeneID" id="712280"/>
<dbReference type="KEGG" id="mcc:712280"/>
<dbReference type="CTD" id="3383"/>
<dbReference type="VEuPathDB" id="HostDB:ENSMMUG00000014896"/>
<dbReference type="VGNC" id="VGNC:110637">
    <property type="gene designation" value="ICAM1"/>
</dbReference>
<dbReference type="GeneTree" id="ENSGT00940000162311"/>
<dbReference type="HOGENOM" id="CLU_036160_1_1_1"/>
<dbReference type="InParanoid" id="Q5NKV6"/>
<dbReference type="OrthoDB" id="6250964at2759"/>
<dbReference type="Proteomes" id="UP000006718">
    <property type="component" value="Chromosome 19"/>
</dbReference>
<dbReference type="Bgee" id="ENSMMUG00000014896">
    <property type="expression patterns" value="Expressed in lung and 22 other cell types or tissues"/>
</dbReference>
<dbReference type="ExpressionAtlas" id="Q5NKV6">
    <property type="expression patterns" value="baseline"/>
</dbReference>
<dbReference type="GO" id="GO:0005886">
    <property type="term" value="C:plasma membrane"/>
    <property type="evidence" value="ECO:0000318"/>
    <property type="project" value="GO_Central"/>
</dbReference>
<dbReference type="GO" id="GO:0005178">
    <property type="term" value="F:integrin binding"/>
    <property type="evidence" value="ECO:0000318"/>
    <property type="project" value="GO_Central"/>
</dbReference>
<dbReference type="GO" id="GO:0007155">
    <property type="term" value="P:cell adhesion"/>
    <property type="evidence" value="ECO:0000318"/>
    <property type="project" value="GO_Central"/>
</dbReference>
<dbReference type="GO" id="GO:0098609">
    <property type="term" value="P:cell-cell adhesion"/>
    <property type="evidence" value="ECO:0007669"/>
    <property type="project" value="InterPro"/>
</dbReference>
<dbReference type="CDD" id="cd20996">
    <property type="entry name" value="IgI_N_ICAM-1"/>
    <property type="match status" value="1"/>
</dbReference>
<dbReference type="FunFam" id="2.60.40.10:FF:000194">
    <property type="entry name" value="Intercellular adhesion molecule 1"/>
    <property type="match status" value="1"/>
</dbReference>
<dbReference type="FunFam" id="2.60.40.10:FF:000459">
    <property type="entry name" value="Intercellular adhesion molecule 1"/>
    <property type="match status" value="1"/>
</dbReference>
<dbReference type="FunFam" id="2.60.40.10:FF:000641">
    <property type="entry name" value="Intercellular adhesion molecule 1"/>
    <property type="match status" value="1"/>
</dbReference>
<dbReference type="FunFam" id="2.60.40.10:FF:000648">
    <property type="entry name" value="Intercellular adhesion molecule 1"/>
    <property type="match status" value="1"/>
</dbReference>
<dbReference type="FunFam" id="2.60.40.10:FF:000338">
    <property type="entry name" value="intercellular adhesion molecule 5"/>
    <property type="match status" value="1"/>
</dbReference>
<dbReference type="Gene3D" id="2.60.40.10">
    <property type="entry name" value="Immunoglobulins"/>
    <property type="match status" value="5"/>
</dbReference>
<dbReference type="InterPro" id="IPR003988">
    <property type="entry name" value="ICAM"/>
</dbReference>
<dbReference type="InterPro" id="IPR048679">
    <property type="entry name" value="ICAM1_3_5_D2"/>
</dbReference>
<dbReference type="InterPro" id="IPR013768">
    <property type="entry name" value="ICAM_N"/>
</dbReference>
<dbReference type="InterPro" id="IPR047012">
    <property type="entry name" value="ICAM_VCAM"/>
</dbReference>
<dbReference type="InterPro" id="IPR003987">
    <property type="entry name" value="ICAM_VCAM_N"/>
</dbReference>
<dbReference type="InterPro" id="IPR036179">
    <property type="entry name" value="Ig-like_dom_sf"/>
</dbReference>
<dbReference type="InterPro" id="IPR013783">
    <property type="entry name" value="Ig-like_fold"/>
</dbReference>
<dbReference type="InterPro" id="IPR003599">
    <property type="entry name" value="Ig_sub"/>
</dbReference>
<dbReference type="PANTHER" id="PTHR13771">
    <property type="entry name" value="INTERCELLULAR ADHESION MOLECULE"/>
    <property type="match status" value="1"/>
</dbReference>
<dbReference type="PANTHER" id="PTHR13771:SF18">
    <property type="entry name" value="INTERCELLULAR ADHESION MOLECULE 1"/>
    <property type="match status" value="1"/>
</dbReference>
<dbReference type="Pfam" id="PF21146">
    <property type="entry name" value="ICAM1_3_5_D2"/>
    <property type="match status" value="1"/>
</dbReference>
<dbReference type="Pfam" id="PF03921">
    <property type="entry name" value="ICAM_N"/>
    <property type="match status" value="1"/>
</dbReference>
<dbReference type="Pfam" id="PF13895">
    <property type="entry name" value="Ig_2"/>
    <property type="match status" value="1"/>
</dbReference>
<dbReference type="PRINTS" id="PR01473">
    <property type="entry name" value="ICAM"/>
</dbReference>
<dbReference type="PRINTS" id="PR01472">
    <property type="entry name" value="ICAMVCAM1"/>
</dbReference>
<dbReference type="SMART" id="SM00409">
    <property type="entry name" value="IG"/>
    <property type="match status" value="3"/>
</dbReference>
<dbReference type="SUPFAM" id="SSF48726">
    <property type="entry name" value="Immunoglobulin"/>
    <property type="match status" value="5"/>
</dbReference>
<name>ICAM1_MACMU</name>
<protein>
    <recommendedName>
        <fullName>Intercellular adhesion molecule 1</fullName>
        <shortName>ICAM-1</shortName>
    </recommendedName>
    <cdAntigenName>CD54</cdAntigenName>
</protein>
<proteinExistence type="evidence at transcript level"/>
<organism>
    <name type="scientific">Macaca mulatta</name>
    <name type="common">Rhesus macaque</name>
    <dbReference type="NCBI Taxonomy" id="9544"/>
    <lineage>
        <taxon>Eukaryota</taxon>
        <taxon>Metazoa</taxon>
        <taxon>Chordata</taxon>
        <taxon>Craniata</taxon>
        <taxon>Vertebrata</taxon>
        <taxon>Euteleostomi</taxon>
        <taxon>Mammalia</taxon>
        <taxon>Eutheria</taxon>
        <taxon>Euarchontoglires</taxon>
        <taxon>Primates</taxon>
        <taxon>Haplorrhini</taxon>
        <taxon>Catarrhini</taxon>
        <taxon>Cercopithecidae</taxon>
        <taxon>Cercopithecinae</taxon>
        <taxon>Macaca</taxon>
    </lineage>
</organism>
<gene>
    <name type="primary">ICAM1</name>
</gene>
<reference key="1">
    <citation type="submission" date="2001-01" db="EMBL/GenBank/DDBJ databases">
        <title>The chimpanzee ICAM proteins have been positively selected.</title>
        <authorList>
            <person name="Messier W."/>
            <person name="Walter N.A.R."/>
            <person name="Hink R.L."/>
        </authorList>
    </citation>
    <scope>NUCLEOTIDE SEQUENCE [MRNA]</scope>
    <source>
        <tissue>Blood</tissue>
    </source>
</reference>
<evidence type="ECO:0000250" key="1"/>
<evidence type="ECO:0000250" key="2">
    <source>
        <dbReference type="UniProtKB" id="P05362"/>
    </source>
</evidence>
<evidence type="ECO:0000255" key="3"/>
<evidence type="ECO:0000256" key="4">
    <source>
        <dbReference type="SAM" id="MobiDB-lite"/>
    </source>
</evidence>
<evidence type="ECO:0000305" key="5"/>
<keyword id="KW-0130">Cell adhesion</keyword>
<keyword id="KW-1015">Disulfide bond</keyword>
<keyword id="KW-0325">Glycoprotein</keyword>
<keyword id="KW-0393">Immunoglobulin domain</keyword>
<keyword id="KW-0472">Membrane</keyword>
<keyword id="KW-0597">Phosphoprotein</keyword>
<keyword id="KW-1185">Reference proteome</keyword>
<keyword id="KW-0677">Repeat</keyword>
<keyword id="KW-0732">Signal</keyword>
<keyword id="KW-0812">Transmembrane</keyword>
<keyword id="KW-1133">Transmembrane helix</keyword>
<keyword id="KW-0832">Ubl conjugation</keyword>
<comment type="function">
    <text evidence="1">ICAM proteins are ligands for the leukocyte adhesion protein LFA-1 (integrin alpha-L/beta-2). During leukocyte trans-endothelial migration, ICAM1 engagement promotes the assembly of endothelial apical cups through ARHGEF26/SGEF and RHOG activation (By similarity).</text>
</comment>
<comment type="subunit">
    <text evidence="2">Homodimer. Interacts with MUC1 and promotes cell aggregation in epithelial cells. Interacts with ARHGEF26/SGEF. Interacts (on T cell side) with CD81, CD247 and CD9 at immunological synapses between antigen-presenting cells and T cells.</text>
</comment>
<comment type="subcellular location">
    <subcellularLocation>
        <location evidence="1">Membrane</location>
        <topology evidence="1">Single-pass type I membrane protein</topology>
    </subcellularLocation>
</comment>
<comment type="PTM">
    <text evidence="1">Monoubiquitinated, which is promoted by MARCH9 and leads to endocytosis.</text>
</comment>
<comment type="similarity">
    <text evidence="5">Belongs to the immunoglobulin superfamily. ICAM family.</text>
</comment>
<sequence>MAPSGPQPALPILVVLLGALLLGPGNAQTSVFPPEVILPRGGSVKVNCSASCDQPISLGMETPLPKKEILPGGNNWKMYELSNVQEDSQPMCYSNCPDGQSSAKTLLTVYWTPERVELAPLPPWQPVGKNLTLRCQVEGGAPRANLTVMLLRGEKELSRQSAVGEPAEVTTTVPVGRDDHGANFSCRTELDLRPYVLKLFENTSAPHQLQTFDLPATPPQLVSPQVLEVDTQGTVVCSLDGLFPVSEAQVSLALGDQKLNPTITYGNNSLSAKASVKVTAEEEGTQQLLCGVMLGNQTQETRQTVTIYSFPAPNVNLTKPEVSEGTEVIVECEAHPRAKVMLNGVPAQPPGPRAQFLLKATPEDNGRSFSCSATLEVAGQLVHKNQTRELRVLYGPRLDEKDCPGNWTWPENSQQTPMCQAWGNPLPQLKCLKDGTFPLPIGQSVTVTRDLEGTYLCQARSTRGEVTREVTVNVLSPRYEVVIIPVVAAAVILGTAGVATYLYNRQRKIRKYRLQQAQNGTPMKPNTQATPP</sequence>
<feature type="signal peptide" evidence="1">
    <location>
        <begin position="1"/>
        <end position="27"/>
    </location>
</feature>
<feature type="chain" id="PRO_0000014784" description="Intercellular adhesion molecule 1">
    <location>
        <begin position="28"/>
        <end position="532"/>
    </location>
</feature>
<feature type="topological domain" description="Extracellular" evidence="3">
    <location>
        <begin position="28"/>
        <end position="480"/>
    </location>
</feature>
<feature type="transmembrane region" description="Helical" evidence="3">
    <location>
        <begin position="481"/>
        <end position="503"/>
    </location>
</feature>
<feature type="topological domain" description="Cytoplasmic" evidence="3">
    <location>
        <begin position="504"/>
        <end position="532"/>
    </location>
</feature>
<feature type="domain" description="Ig-like C2-type 1">
    <location>
        <begin position="41"/>
        <end position="103"/>
    </location>
</feature>
<feature type="domain" description="Ig-like C2-type 2">
    <location>
        <begin position="128"/>
        <end position="193"/>
    </location>
</feature>
<feature type="domain" description="Ig-like C2-type 3">
    <location>
        <begin position="230"/>
        <end position="297"/>
    </location>
</feature>
<feature type="domain" description="Ig-like C2-type 4">
    <location>
        <begin position="325"/>
        <end position="378"/>
    </location>
</feature>
<feature type="domain" description="Ig-like C2-type 5">
    <location>
        <begin position="412"/>
        <end position="464"/>
    </location>
</feature>
<feature type="region of interest" description="Disordered" evidence="4">
    <location>
        <begin position="513"/>
        <end position="532"/>
    </location>
</feature>
<feature type="short sequence motif" description="Cell attachment site; atypical" evidence="3">
    <location>
        <begin position="152"/>
        <end position="154"/>
    </location>
</feature>
<feature type="compositionally biased region" description="Polar residues" evidence="4">
    <location>
        <begin position="515"/>
        <end position="532"/>
    </location>
</feature>
<feature type="modified residue" description="Phosphothreonine" evidence="2">
    <location>
        <position position="521"/>
    </location>
</feature>
<feature type="modified residue" description="Phosphothreonine" evidence="2">
    <location>
        <position position="530"/>
    </location>
</feature>
<feature type="glycosylation site" description="N-linked (GlcNAc...) asparagine" evidence="3">
    <location>
        <position position="47"/>
    </location>
</feature>
<feature type="glycosylation site" description="N-linked (GlcNAc...) asparagine" evidence="3">
    <location>
        <position position="130"/>
    </location>
</feature>
<feature type="glycosylation site" description="N-linked (GlcNAc...) asparagine" evidence="3">
    <location>
        <position position="145"/>
    </location>
</feature>
<feature type="glycosylation site" description="N-linked (GlcNAc...) asparagine" evidence="3">
    <location>
        <position position="183"/>
    </location>
</feature>
<feature type="glycosylation site" description="N-linked (GlcNAc...) asparagine" evidence="3">
    <location>
        <position position="202"/>
    </location>
</feature>
<feature type="glycosylation site" description="N-linked (GlcNAc...) asparagine" evidence="3">
    <location>
        <position position="267"/>
    </location>
</feature>
<feature type="glycosylation site" description="N-linked (GlcNAc...) asparagine" evidence="3">
    <location>
        <position position="296"/>
    </location>
</feature>
<feature type="glycosylation site" description="N-linked (GlcNAc...) asparagine" evidence="3">
    <location>
        <position position="316"/>
    </location>
</feature>
<feature type="glycosylation site" description="N-linked (GlcNAc...) asparagine" evidence="3">
    <location>
        <position position="385"/>
    </location>
</feature>
<feature type="glycosylation site" description="N-linked (GlcNAc...) asparagine" evidence="3">
    <location>
        <position position="406"/>
    </location>
</feature>
<feature type="disulfide bond" evidence="2">
    <location>
        <begin position="48"/>
        <end position="92"/>
    </location>
</feature>
<feature type="disulfide bond" evidence="2">
    <location>
        <begin position="52"/>
        <end position="96"/>
    </location>
</feature>
<feature type="disulfide bond" evidence="2">
    <location>
        <begin position="135"/>
        <end position="186"/>
    </location>
</feature>
<feature type="disulfide bond" evidence="2">
    <location>
        <begin position="237"/>
        <end position="290"/>
    </location>
</feature>
<feature type="disulfide bond" evidence="2">
    <location>
        <begin position="332"/>
        <end position="371"/>
    </location>
</feature>
<feature type="disulfide bond" evidence="2">
    <location>
        <begin position="403"/>
        <end position="419"/>
    </location>
</feature>
<feature type="disulfide bond" evidence="1">
    <location>
        <begin position="419"/>
        <end position="457"/>
    </location>
</feature>
<feature type="disulfide bond" evidence="2">
    <location>
        <begin position="431"/>
        <end position="457"/>
    </location>
</feature>
<accession>Q5NKV6</accession>